<sequence length="93" mass="10458">MSRSIKKPPFCAPHVLRLVNKAVAQNKLNSIINIHSRSSVILNKFIGLTFGVYNGKTYVPVKVNDNMVGRKFGEFSPTRRYTGHVGDKKVSRK</sequence>
<evidence type="ECO:0000255" key="1">
    <source>
        <dbReference type="HAMAP-Rule" id="MF_00531"/>
    </source>
</evidence>
<evidence type="ECO:0000305" key="2"/>
<protein>
    <recommendedName>
        <fullName evidence="1">Small ribosomal subunit protein uS19</fullName>
    </recommendedName>
    <alternativeName>
        <fullName evidence="2">30S ribosomal protein S19</fullName>
    </alternativeName>
</protein>
<keyword id="KW-0687">Ribonucleoprotein</keyword>
<keyword id="KW-0689">Ribosomal protein</keyword>
<keyword id="KW-0694">RNA-binding</keyword>
<keyword id="KW-0699">rRNA-binding</keyword>
<dbReference type="EMBL" id="CP000107">
    <property type="protein sequence ID" value="AAZ68642.1"/>
    <property type="molecule type" value="Genomic_DNA"/>
</dbReference>
<dbReference type="RefSeq" id="WP_011304720.1">
    <property type="nucleotide sequence ID" value="NC_007354.1"/>
</dbReference>
<dbReference type="SMR" id="Q3YRL3"/>
<dbReference type="FunCoup" id="Q3YRL3">
    <property type="interactions" value="308"/>
</dbReference>
<dbReference type="STRING" id="269484.Ecaj_0608"/>
<dbReference type="KEGG" id="ecn:Ecaj_0608"/>
<dbReference type="eggNOG" id="COG0185">
    <property type="taxonomic scope" value="Bacteria"/>
</dbReference>
<dbReference type="HOGENOM" id="CLU_144911_0_1_5"/>
<dbReference type="InParanoid" id="Q3YRL3"/>
<dbReference type="Proteomes" id="UP000000435">
    <property type="component" value="Chromosome"/>
</dbReference>
<dbReference type="GO" id="GO:0005737">
    <property type="term" value="C:cytoplasm"/>
    <property type="evidence" value="ECO:0007669"/>
    <property type="project" value="UniProtKB-ARBA"/>
</dbReference>
<dbReference type="GO" id="GO:0015935">
    <property type="term" value="C:small ribosomal subunit"/>
    <property type="evidence" value="ECO:0007669"/>
    <property type="project" value="InterPro"/>
</dbReference>
<dbReference type="GO" id="GO:0019843">
    <property type="term" value="F:rRNA binding"/>
    <property type="evidence" value="ECO:0007669"/>
    <property type="project" value="UniProtKB-UniRule"/>
</dbReference>
<dbReference type="GO" id="GO:0003735">
    <property type="term" value="F:structural constituent of ribosome"/>
    <property type="evidence" value="ECO:0007669"/>
    <property type="project" value="InterPro"/>
</dbReference>
<dbReference type="GO" id="GO:0000028">
    <property type="term" value="P:ribosomal small subunit assembly"/>
    <property type="evidence" value="ECO:0007669"/>
    <property type="project" value="TreeGrafter"/>
</dbReference>
<dbReference type="GO" id="GO:0006412">
    <property type="term" value="P:translation"/>
    <property type="evidence" value="ECO:0007669"/>
    <property type="project" value="UniProtKB-UniRule"/>
</dbReference>
<dbReference type="FunFam" id="3.30.860.10:FF:000001">
    <property type="entry name" value="30S ribosomal protein S19"/>
    <property type="match status" value="1"/>
</dbReference>
<dbReference type="Gene3D" id="3.30.860.10">
    <property type="entry name" value="30s Ribosomal Protein S19, Chain A"/>
    <property type="match status" value="1"/>
</dbReference>
<dbReference type="HAMAP" id="MF_00531">
    <property type="entry name" value="Ribosomal_uS19"/>
    <property type="match status" value="1"/>
</dbReference>
<dbReference type="InterPro" id="IPR002222">
    <property type="entry name" value="Ribosomal_uS19"/>
</dbReference>
<dbReference type="InterPro" id="IPR005732">
    <property type="entry name" value="Ribosomal_uS19_bac-type"/>
</dbReference>
<dbReference type="InterPro" id="IPR020934">
    <property type="entry name" value="Ribosomal_uS19_CS"/>
</dbReference>
<dbReference type="InterPro" id="IPR023575">
    <property type="entry name" value="Ribosomal_uS19_SF"/>
</dbReference>
<dbReference type="NCBIfam" id="TIGR01050">
    <property type="entry name" value="rpsS_bact"/>
    <property type="match status" value="1"/>
</dbReference>
<dbReference type="PANTHER" id="PTHR11880">
    <property type="entry name" value="RIBOSOMAL PROTEIN S19P FAMILY MEMBER"/>
    <property type="match status" value="1"/>
</dbReference>
<dbReference type="PANTHER" id="PTHR11880:SF8">
    <property type="entry name" value="SMALL RIBOSOMAL SUBUNIT PROTEIN US19M"/>
    <property type="match status" value="1"/>
</dbReference>
<dbReference type="Pfam" id="PF00203">
    <property type="entry name" value="Ribosomal_S19"/>
    <property type="match status" value="1"/>
</dbReference>
<dbReference type="PIRSF" id="PIRSF002144">
    <property type="entry name" value="Ribosomal_S19"/>
    <property type="match status" value="1"/>
</dbReference>
<dbReference type="PRINTS" id="PR00975">
    <property type="entry name" value="RIBOSOMALS19"/>
</dbReference>
<dbReference type="SUPFAM" id="SSF54570">
    <property type="entry name" value="Ribosomal protein S19"/>
    <property type="match status" value="1"/>
</dbReference>
<dbReference type="PROSITE" id="PS00323">
    <property type="entry name" value="RIBOSOMAL_S19"/>
    <property type="match status" value="1"/>
</dbReference>
<name>RS19_EHRCJ</name>
<comment type="function">
    <text evidence="1">Protein S19 forms a complex with S13 that binds strongly to the 16S ribosomal RNA.</text>
</comment>
<comment type="similarity">
    <text evidence="1">Belongs to the universal ribosomal protein uS19 family.</text>
</comment>
<reference key="1">
    <citation type="journal article" date="2006" name="J. Bacteriol.">
        <title>The genome of the obligately intracellular bacterium Ehrlichia canis reveals themes of complex membrane structure and immune evasion strategies.</title>
        <authorList>
            <person name="Mavromatis K."/>
            <person name="Doyle C.K."/>
            <person name="Lykidis A."/>
            <person name="Ivanova N."/>
            <person name="Francino M.P."/>
            <person name="Chain P."/>
            <person name="Shin M."/>
            <person name="Malfatti S."/>
            <person name="Larimer F."/>
            <person name="Copeland A."/>
            <person name="Detter J.C."/>
            <person name="Land M."/>
            <person name="Richardson P.M."/>
            <person name="Yu X.J."/>
            <person name="Walker D.H."/>
            <person name="McBride J.W."/>
            <person name="Kyrpides N.C."/>
        </authorList>
    </citation>
    <scope>NUCLEOTIDE SEQUENCE [LARGE SCALE GENOMIC DNA]</scope>
    <source>
        <strain>Jake</strain>
    </source>
</reference>
<gene>
    <name evidence="1" type="primary">rpsS</name>
    <name type="ordered locus">Ecaj_0608</name>
</gene>
<feature type="chain" id="PRO_0000354288" description="Small ribosomal subunit protein uS19">
    <location>
        <begin position="1"/>
        <end position="93"/>
    </location>
</feature>
<organism>
    <name type="scientific">Ehrlichia canis (strain Jake)</name>
    <dbReference type="NCBI Taxonomy" id="269484"/>
    <lineage>
        <taxon>Bacteria</taxon>
        <taxon>Pseudomonadati</taxon>
        <taxon>Pseudomonadota</taxon>
        <taxon>Alphaproteobacteria</taxon>
        <taxon>Rickettsiales</taxon>
        <taxon>Anaplasmataceae</taxon>
        <taxon>Ehrlichia</taxon>
    </lineage>
</organism>
<proteinExistence type="inferred from homology"/>
<accession>Q3YRL3</accession>